<protein>
    <recommendedName>
        <fullName evidence="1">Carbamoyltransferase HypF</fullName>
        <ecNumber evidence="1">6.2.-.-</ecNumber>
    </recommendedName>
    <alternativeName>
        <fullName>Carbamoyl phosphate-converting enzyme HypF</fullName>
    </alternativeName>
    <alternativeName>
        <fullName>[NiFe]-hydrogenase maturation factor HypF</fullName>
        <shortName>Hydrogenase maturation protein HypF</shortName>
    </alternativeName>
</protein>
<keyword id="KW-0436">Ligase</keyword>
<keyword id="KW-0479">Metal-binding</keyword>
<keyword id="KW-0862">Zinc</keyword>
<keyword id="KW-0863">Zinc-finger</keyword>
<evidence type="ECO:0000250" key="1">
    <source>
        <dbReference type="UniProtKB" id="P30131"/>
    </source>
</evidence>
<evidence type="ECO:0000255" key="2">
    <source>
        <dbReference type="PROSITE-ProRule" id="PRU00518"/>
    </source>
</evidence>
<evidence type="ECO:0000255" key="3">
    <source>
        <dbReference type="PROSITE-ProRule" id="PRU00520"/>
    </source>
</evidence>
<evidence type="ECO:0000305" key="4"/>
<proteinExistence type="inferred from homology"/>
<comment type="function">
    <text evidence="1">Involved in the maturation of [NiFe] hydrogenases. Along with HypE, it catalyzes the synthesis of the CN ligands of the active site iron of [NiFe]-hydrogenases. HypF functions as a carbamoyl transferase using carbamoylphosphate as a substrate and transferring the carboxamido moiety in an ATP-dependent reaction to the thiolate of the C-terminal cysteine of HypE yielding a protein-S-carboxamide.</text>
</comment>
<comment type="catalytic activity">
    <reaction evidence="1">
        <text>C-terminal L-cysteinyl-[HypE protein] + carbamoyl phosphate + ATP + H2O = C-terminal S-carboxamide-L-cysteinyl-[HypE protein] + AMP + phosphate + diphosphate + H(+)</text>
        <dbReference type="Rhea" id="RHEA:55636"/>
        <dbReference type="Rhea" id="RHEA-COMP:14247"/>
        <dbReference type="Rhea" id="RHEA-COMP:14392"/>
        <dbReference type="ChEBI" id="CHEBI:15377"/>
        <dbReference type="ChEBI" id="CHEBI:15378"/>
        <dbReference type="ChEBI" id="CHEBI:30616"/>
        <dbReference type="ChEBI" id="CHEBI:33019"/>
        <dbReference type="ChEBI" id="CHEBI:43474"/>
        <dbReference type="ChEBI" id="CHEBI:58228"/>
        <dbReference type="ChEBI" id="CHEBI:76913"/>
        <dbReference type="ChEBI" id="CHEBI:139126"/>
        <dbReference type="ChEBI" id="CHEBI:456215"/>
    </reaction>
</comment>
<comment type="pathway">
    <text evidence="1">Protein modification; [NiFe] hydrogenase maturation.</text>
</comment>
<comment type="similarity">
    <text evidence="4">Belongs to the carbamoyltransferase HypF family.</text>
</comment>
<accession>P28156</accession>
<sequence>MTPSLARQIESPVRRLRLRVRGAVQGVGFRPFAYRLARAMRLSGFVLNDSAGVLIEIEGRDANHFPEAVRTQAPPLARIDSIDVLELVPAGGERFEILESLGGRSATRIGADAATCDGCRRELTDPASRFFGYPFVNCTHCGPRFTITRALPYDRAHTSMASFPMCRTCAADYVDPENRRFHAEPVACPNCGPRLSHPIKEISARLEGGAIVALKGVGGFHLLCDARNDGAIGLLRLRKAGDQKPFAVMVRDIEAARQLARPNEAEEALLISPARPIVLVAARAGELSGLIAPGLTRVGLMLAYAPVHHLLLDELSRSSPHCHAALVATSANPGGEPLVADNDDAGRRLVAIADLVVTHDRDIVVRADDSVMQVIDGAPAFIRRARGFVPEPVDLGADGPSVIATGADLKNTICVTRGREAFLSQHIGGLDNAEAIRFQREVIAHLCSILDVKPEFAACDLHPDFRSVRTAEGLNLPIVPVQHHLAHVAAVVADDRLSGPVLGLALDGHGFGTDGTSWGGEIVVIDHHRWQRAGSLMPLPLPSGDRAAREPWRMGVAALQAAGRIDLAPQLWPGHSGVTQLTAMFSGSMPTPVTSSLGRLFDAAAAIAGVRLVQDYEGQAAMEFEALVRAPRCLAGGYSIGDGTLDFRPLILHLAEQGRPCGADAADVFHGTLIAGLADWAARGAAARGTRQVALGGGCMMNRVLAAGLARALRERGLEPSLPRLAPANDGGIALGQPAYARQVIMNEHASIEENRTCA</sequence>
<feature type="chain" id="PRO_0000071616" description="Carbamoyltransferase HypF">
    <location>
        <begin position="1"/>
        <end position="759"/>
    </location>
</feature>
<feature type="domain" description="Acylphosphatase-like" evidence="3">
    <location>
        <begin position="15"/>
        <end position="99"/>
    </location>
</feature>
<feature type="domain" description="YrdC-like" evidence="2">
    <location>
        <begin position="196"/>
        <end position="387"/>
    </location>
</feature>
<feature type="zinc finger region" description="C4-type" evidence="1">
    <location>
        <begin position="116"/>
        <end position="141"/>
    </location>
</feature>
<feature type="zinc finger region" description="C4-type" evidence="1">
    <location>
        <begin position="166"/>
        <end position="191"/>
    </location>
</feature>
<name>HYPF_RHILV</name>
<gene>
    <name type="primary">hypF</name>
    <name type="synonym">hupN</name>
</gene>
<organism>
    <name type="scientific">Rhizobium leguminosarum bv. viciae</name>
    <dbReference type="NCBI Taxonomy" id="387"/>
    <lineage>
        <taxon>Bacteria</taxon>
        <taxon>Pseudomonadati</taxon>
        <taxon>Pseudomonadota</taxon>
        <taxon>Alphaproteobacteria</taxon>
        <taxon>Hyphomicrobiales</taxon>
        <taxon>Rhizobiaceae</taxon>
        <taxon>Rhizobium/Agrobacterium group</taxon>
        <taxon>Rhizobium</taxon>
    </lineage>
</organism>
<dbReference type="EC" id="6.2.-.-" evidence="1"/>
<dbReference type="EMBL" id="X52974">
    <property type="protein sequence ID" value="CAA37161.1"/>
    <property type="molecule type" value="Genomic_DNA"/>
</dbReference>
<dbReference type="PIR" id="S32875">
    <property type="entry name" value="S32875"/>
</dbReference>
<dbReference type="SMR" id="P28156"/>
<dbReference type="UniPathway" id="UPA00335"/>
<dbReference type="GO" id="GO:0016743">
    <property type="term" value="F:carboxyl- or carbamoyltransferase activity"/>
    <property type="evidence" value="ECO:0007669"/>
    <property type="project" value="InterPro"/>
</dbReference>
<dbReference type="GO" id="GO:0003725">
    <property type="term" value="F:double-stranded RNA binding"/>
    <property type="evidence" value="ECO:0007669"/>
    <property type="project" value="InterPro"/>
</dbReference>
<dbReference type="GO" id="GO:0016874">
    <property type="term" value="F:ligase activity"/>
    <property type="evidence" value="ECO:0007669"/>
    <property type="project" value="UniProtKB-KW"/>
</dbReference>
<dbReference type="GO" id="GO:0008270">
    <property type="term" value="F:zinc ion binding"/>
    <property type="evidence" value="ECO:0007669"/>
    <property type="project" value="UniProtKB-KW"/>
</dbReference>
<dbReference type="GO" id="GO:0051604">
    <property type="term" value="P:protein maturation"/>
    <property type="evidence" value="ECO:0007669"/>
    <property type="project" value="TreeGrafter"/>
</dbReference>
<dbReference type="Gene3D" id="3.30.110.120">
    <property type="match status" value="1"/>
</dbReference>
<dbReference type="Gene3D" id="3.30.420.360">
    <property type="match status" value="1"/>
</dbReference>
<dbReference type="Gene3D" id="3.30.420.40">
    <property type="match status" value="1"/>
</dbReference>
<dbReference type="Gene3D" id="3.90.870.50">
    <property type="match status" value="1"/>
</dbReference>
<dbReference type="InterPro" id="IPR001792">
    <property type="entry name" value="Acylphosphatase-like_dom"/>
</dbReference>
<dbReference type="InterPro" id="IPR036046">
    <property type="entry name" value="Acylphosphatase-like_dom_sf"/>
</dbReference>
<dbReference type="InterPro" id="IPR017968">
    <property type="entry name" value="Acylphosphatase_CS"/>
</dbReference>
<dbReference type="InterPro" id="IPR051060">
    <property type="entry name" value="Carbamoyltrans_HypF-like"/>
</dbReference>
<dbReference type="InterPro" id="IPR004421">
    <property type="entry name" value="Carbamoyltransferase_HypF"/>
</dbReference>
<dbReference type="InterPro" id="IPR017945">
    <property type="entry name" value="DHBP_synth_RibB-like_a/b_dom"/>
</dbReference>
<dbReference type="InterPro" id="IPR041440">
    <property type="entry name" value="HypF_C"/>
</dbReference>
<dbReference type="InterPro" id="IPR055128">
    <property type="entry name" value="HypF_C_2"/>
</dbReference>
<dbReference type="InterPro" id="IPR006070">
    <property type="entry name" value="Sua5-like_dom"/>
</dbReference>
<dbReference type="InterPro" id="IPR011125">
    <property type="entry name" value="Znf_HypF"/>
</dbReference>
<dbReference type="NCBIfam" id="TIGR00143">
    <property type="entry name" value="hypF"/>
    <property type="match status" value="1"/>
</dbReference>
<dbReference type="PANTHER" id="PTHR42959">
    <property type="entry name" value="CARBAMOYLTRANSFERASE"/>
    <property type="match status" value="1"/>
</dbReference>
<dbReference type="PANTHER" id="PTHR42959:SF1">
    <property type="entry name" value="CARBAMOYLTRANSFERASE HYPF"/>
    <property type="match status" value="1"/>
</dbReference>
<dbReference type="Pfam" id="PF00708">
    <property type="entry name" value="Acylphosphatase"/>
    <property type="match status" value="1"/>
</dbReference>
<dbReference type="Pfam" id="PF17788">
    <property type="entry name" value="HypF_C"/>
    <property type="match status" value="1"/>
</dbReference>
<dbReference type="Pfam" id="PF22521">
    <property type="entry name" value="HypF_C_2"/>
    <property type="match status" value="1"/>
</dbReference>
<dbReference type="Pfam" id="PF01300">
    <property type="entry name" value="Sua5_yciO_yrdC"/>
    <property type="match status" value="1"/>
</dbReference>
<dbReference type="Pfam" id="PF07503">
    <property type="entry name" value="zf-HYPF"/>
    <property type="match status" value="2"/>
</dbReference>
<dbReference type="PIRSF" id="PIRSF006256">
    <property type="entry name" value="CMPcnvr_hdrg_mat"/>
    <property type="match status" value="1"/>
</dbReference>
<dbReference type="SUPFAM" id="SSF54975">
    <property type="entry name" value="Acylphosphatase/BLUF domain-like"/>
    <property type="match status" value="1"/>
</dbReference>
<dbReference type="SUPFAM" id="SSF55821">
    <property type="entry name" value="YrdC/RibB"/>
    <property type="match status" value="1"/>
</dbReference>
<dbReference type="PROSITE" id="PS00150">
    <property type="entry name" value="ACYLPHOSPHATASE_1"/>
    <property type="match status" value="1"/>
</dbReference>
<dbReference type="PROSITE" id="PS51160">
    <property type="entry name" value="ACYLPHOSPHATASE_3"/>
    <property type="match status" value="1"/>
</dbReference>
<dbReference type="PROSITE" id="PS51163">
    <property type="entry name" value="YRDC"/>
    <property type="match status" value="1"/>
</dbReference>
<reference key="1">
    <citation type="journal article" date="1993" name="Mol. Microbiol.">
        <title>Molecular analysis of a microaerobically induced operon required for hydrogenase synthesis in Rhizobium leguminosarum biovar viciae.</title>
        <authorList>
            <person name="Rey L."/>
            <person name="Murillo J."/>
            <person name="Hernando Y."/>
            <person name="Hidalgo E."/>
            <person name="Cabrera E."/>
            <person name="Imperial J."/>
            <person name="Ruiz-Argueso T."/>
        </authorList>
    </citation>
    <scope>NUCLEOTIDE SEQUENCE [GENOMIC DNA]</scope>
    <source>
        <strain>128c53</strain>
    </source>
</reference>